<keyword id="KW-0030">Aminoacyl-tRNA synthetase</keyword>
<keyword id="KW-0067">ATP-binding</keyword>
<keyword id="KW-0963">Cytoplasm</keyword>
<keyword id="KW-0436">Ligase</keyword>
<keyword id="KW-0479">Metal-binding</keyword>
<keyword id="KW-0547">Nucleotide-binding</keyword>
<keyword id="KW-0648">Protein biosynthesis</keyword>
<keyword id="KW-1185">Reference proteome</keyword>
<keyword id="KW-0862">Zinc</keyword>
<dbReference type="EC" id="6.1.1.10" evidence="1"/>
<dbReference type="EMBL" id="BA000023">
    <property type="protein sequence ID" value="BAK54568.1"/>
    <property type="molecule type" value="Genomic_DNA"/>
</dbReference>
<dbReference type="RefSeq" id="WP_010979477.1">
    <property type="nucleotide sequence ID" value="NC_003106.2"/>
</dbReference>
<dbReference type="SMR" id="Q971C1"/>
<dbReference type="STRING" id="273063.STK_14320"/>
<dbReference type="GeneID" id="1459463"/>
<dbReference type="KEGG" id="sto:STK_14320"/>
<dbReference type="PATRIC" id="fig|273063.9.peg.1632"/>
<dbReference type="eggNOG" id="arCOG00810">
    <property type="taxonomic scope" value="Archaea"/>
</dbReference>
<dbReference type="OrthoDB" id="371856at2157"/>
<dbReference type="Proteomes" id="UP000001015">
    <property type="component" value="Chromosome"/>
</dbReference>
<dbReference type="GO" id="GO:0017101">
    <property type="term" value="C:aminoacyl-tRNA synthetase multienzyme complex"/>
    <property type="evidence" value="ECO:0007669"/>
    <property type="project" value="TreeGrafter"/>
</dbReference>
<dbReference type="GO" id="GO:0005829">
    <property type="term" value="C:cytosol"/>
    <property type="evidence" value="ECO:0007669"/>
    <property type="project" value="TreeGrafter"/>
</dbReference>
<dbReference type="GO" id="GO:0005524">
    <property type="term" value="F:ATP binding"/>
    <property type="evidence" value="ECO:0007669"/>
    <property type="project" value="UniProtKB-UniRule"/>
</dbReference>
<dbReference type="GO" id="GO:0046872">
    <property type="term" value="F:metal ion binding"/>
    <property type="evidence" value="ECO:0007669"/>
    <property type="project" value="UniProtKB-KW"/>
</dbReference>
<dbReference type="GO" id="GO:0004825">
    <property type="term" value="F:methionine-tRNA ligase activity"/>
    <property type="evidence" value="ECO:0007669"/>
    <property type="project" value="UniProtKB-UniRule"/>
</dbReference>
<dbReference type="GO" id="GO:0006431">
    <property type="term" value="P:methionyl-tRNA aminoacylation"/>
    <property type="evidence" value="ECO:0007669"/>
    <property type="project" value="UniProtKB-UniRule"/>
</dbReference>
<dbReference type="CDD" id="cd07957">
    <property type="entry name" value="Anticodon_Ia_Met"/>
    <property type="match status" value="1"/>
</dbReference>
<dbReference type="CDD" id="cd00814">
    <property type="entry name" value="MetRS_core"/>
    <property type="match status" value="1"/>
</dbReference>
<dbReference type="FunFam" id="2.20.28.20:FF:000001">
    <property type="entry name" value="Methionine--tRNA ligase"/>
    <property type="match status" value="1"/>
</dbReference>
<dbReference type="Gene3D" id="3.40.50.620">
    <property type="entry name" value="HUPs"/>
    <property type="match status" value="1"/>
</dbReference>
<dbReference type="Gene3D" id="1.10.730.10">
    <property type="entry name" value="Isoleucyl-tRNA Synthetase, Domain 1"/>
    <property type="match status" value="1"/>
</dbReference>
<dbReference type="Gene3D" id="2.20.28.20">
    <property type="entry name" value="Methionyl-tRNA synthetase, Zn-domain"/>
    <property type="match status" value="1"/>
</dbReference>
<dbReference type="HAMAP" id="MF_00098">
    <property type="entry name" value="Met_tRNA_synth_type1"/>
    <property type="match status" value="1"/>
</dbReference>
<dbReference type="InterPro" id="IPR001412">
    <property type="entry name" value="aa-tRNA-synth_I_CS"/>
</dbReference>
<dbReference type="InterPro" id="IPR041872">
    <property type="entry name" value="Anticodon_Met"/>
</dbReference>
<dbReference type="InterPro" id="IPR023458">
    <property type="entry name" value="Met-tRNA_ligase_1"/>
</dbReference>
<dbReference type="InterPro" id="IPR014758">
    <property type="entry name" value="Met-tRNA_synth"/>
</dbReference>
<dbReference type="InterPro" id="IPR015413">
    <property type="entry name" value="Methionyl/Leucyl_tRNA_Synth"/>
</dbReference>
<dbReference type="InterPro" id="IPR033911">
    <property type="entry name" value="MetRS_core"/>
</dbReference>
<dbReference type="InterPro" id="IPR029038">
    <property type="entry name" value="MetRS_Zn"/>
</dbReference>
<dbReference type="InterPro" id="IPR014729">
    <property type="entry name" value="Rossmann-like_a/b/a_fold"/>
</dbReference>
<dbReference type="InterPro" id="IPR009080">
    <property type="entry name" value="tRNAsynth_Ia_anticodon-bd"/>
</dbReference>
<dbReference type="NCBIfam" id="TIGR00398">
    <property type="entry name" value="metG"/>
    <property type="match status" value="1"/>
</dbReference>
<dbReference type="PANTHER" id="PTHR45765">
    <property type="entry name" value="METHIONINE--TRNA LIGASE"/>
    <property type="match status" value="1"/>
</dbReference>
<dbReference type="PANTHER" id="PTHR45765:SF1">
    <property type="entry name" value="METHIONINE--TRNA LIGASE, CYTOPLASMIC"/>
    <property type="match status" value="1"/>
</dbReference>
<dbReference type="Pfam" id="PF19303">
    <property type="entry name" value="Anticodon_3"/>
    <property type="match status" value="1"/>
</dbReference>
<dbReference type="Pfam" id="PF09334">
    <property type="entry name" value="tRNA-synt_1g"/>
    <property type="match status" value="1"/>
</dbReference>
<dbReference type="PRINTS" id="PR01041">
    <property type="entry name" value="TRNASYNTHMET"/>
</dbReference>
<dbReference type="SUPFAM" id="SSF47323">
    <property type="entry name" value="Anticodon-binding domain of a subclass of class I aminoacyl-tRNA synthetases"/>
    <property type="match status" value="1"/>
</dbReference>
<dbReference type="SUPFAM" id="SSF57770">
    <property type="entry name" value="Methionyl-tRNA synthetase (MetRS), Zn-domain"/>
    <property type="match status" value="1"/>
</dbReference>
<dbReference type="SUPFAM" id="SSF52374">
    <property type="entry name" value="Nucleotidylyl transferase"/>
    <property type="match status" value="1"/>
</dbReference>
<dbReference type="PROSITE" id="PS00178">
    <property type="entry name" value="AA_TRNA_LIGASE_I"/>
    <property type="match status" value="1"/>
</dbReference>
<feature type="chain" id="PRO_0000139201" description="Methionine--tRNA ligase">
    <location>
        <begin position="1"/>
        <end position="571"/>
    </location>
</feature>
<feature type="short sequence motif" description="'HIGH' region">
    <location>
        <begin position="10"/>
        <end position="20"/>
    </location>
</feature>
<feature type="short sequence motif" description="'KMSKS' region">
    <location>
        <begin position="333"/>
        <end position="337"/>
    </location>
</feature>
<feature type="binding site" evidence="1">
    <location>
        <position position="143"/>
    </location>
    <ligand>
        <name>Zn(2+)</name>
        <dbReference type="ChEBI" id="CHEBI:29105"/>
    </ligand>
</feature>
<feature type="binding site" evidence="1">
    <location>
        <position position="146"/>
    </location>
    <ligand>
        <name>Zn(2+)</name>
        <dbReference type="ChEBI" id="CHEBI:29105"/>
    </ligand>
</feature>
<feature type="binding site" evidence="1">
    <location>
        <position position="156"/>
    </location>
    <ligand>
        <name>Zn(2+)</name>
        <dbReference type="ChEBI" id="CHEBI:29105"/>
    </ligand>
</feature>
<feature type="binding site" evidence="1">
    <location>
        <position position="159"/>
    </location>
    <ligand>
        <name>Zn(2+)</name>
        <dbReference type="ChEBI" id="CHEBI:29105"/>
    </ligand>
</feature>
<feature type="binding site" evidence="1">
    <location>
        <position position="336"/>
    </location>
    <ligand>
        <name>ATP</name>
        <dbReference type="ChEBI" id="CHEBI:30616"/>
    </ligand>
</feature>
<accession>Q971C1</accession>
<accession>F9VNC2</accession>
<name>SYM_SULTO</name>
<comment type="function">
    <text evidence="1">Is required not only for elongation of protein synthesis but also for the initiation of all mRNA translation through initiator tRNA(fMet) aminoacylation.</text>
</comment>
<comment type="catalytic activity">
    <reaction evidence="1">
        <text>tRNA(Met) + L-methionine + ATP = L-methionyl-tRNA(Met) + AMP + diphosphate</text>
        <dbReference type="Rhea" id="RHEA:13481"/>
        <dbReference type="Rhea" id="RHEA-COMP:9667"/>
        <dbReference type="Rhea" id="RHEA-COMP:9698"/>
        <dbReference type="ChEBI" id="CHEBI:30616"/>
        <dbReference type="ChEBI" id="CHEBI:33019"/>
        <dbReference type="ChEBI" id="CHEBI:57844"/>
        <dbReference type="ChEBI" id="CHEBI:78442"/>
        <dbReference type="ChEBI" id="CHEBI:78530"/>
        <dbReference type="ChEBI" id="CHEBI:456215"/>
        <dbReference type="EC" id="6.1.1.10"/>
    </reaction>
</comment>
<comment type="cofactor">
    <cofactor evidence="1">
        <name>Zn(2+)</name>
        <dbReference type="ChEBI" id="CHEBI:29105"/>
    </cofactor>
    <text evidence="1">Binds 1 zinc ion per subunit.</text>
</comment>
<comment type="subcellular location">
    <subcellularLocation>
        <location evidence="1">Cytoplasm</location>
    </subcellularLocation>
</comment>
<comment type="similarity">
    <text evidence="1">Belongs to the class-I aminoacyl-tRNA synthetase family. MetG type 1 subfamily.</text>
</comment>
<protein>
    <recommendedName>
        <fullName evidence="1">Methionine--tRNA ligase</fullName>
        <ecNumber evidence="1">6.1.1.10</ecNumber>
    </recommendedName>
    <alternativeName>
        <fullName evidence="1">Methionyl-tRNA synthetase</fullName>
        <shortName evidence="1">MetRS</shortName>
    </alternativeName>
</protein>
<evidence type="ECO:0000255" key="1">
    <source>
        <dbReference type="HAMAP-Rule" id="MF_00098"/>
    </source>
</evidence>
<sequence length="571" mass="66488">MKIFVASAWPYVNAVPHLGNLIGSVLSADVFARYARLKYGQENVVFVSGSDEHGTPIEVEAKKRNVNPKELTDQAHEYDKKLFLDVWEISYNNYTRTESEIHKTFVRDFMLKLEKYIKIEEDEIPYCEYDKIYLPDRFVKGTCPYCGFEDARGDQCDNCGRLLTPRLLVNPKCVLCGRTPVFKKTKHWFFDLSAFNDKIEEWIKNSQTLPENVKSVALSWVKEGLKPRSITRDNAWGIPAPFEGAEGKTIYVWFEALLGYISATIEYFKKIGKEEEWKKFWFGNDVKSYYFIGKDNIPFHAVILPAMLMASGENYVLPTVIAATEYLLYEGQKFSKSRKIGVWIDEAPQLLDIEYWRFILIRLRPEERDTNFTWREALRIVNTELNDDIGNYANRVLSMVRRYFNGEVPQIKYEKLKDEDTKFISEIKEAPKKMSELFELGKLKAGSEEILKLARNGNSYLNIRAPWNLIKNDKEEAGNVLNIAVNSLRTLSIMLYPLMPKSAEKLYNMLGFKDIEREKWDLAGELVIKSNHKINEVSVLFKKVELNENDINKKLDEIRKNLEKIRPTLLR</sequence>
<reference key="1">
    <citation type="journal article" date="2001" name="DNA Res.">
        <title>Complete genome sequence of an aerobic thermoacidophilic Crenarchaeon, Sulfolobus tokodaii strain7.</title>
        <authorList>
            <person name="Kawarabayasi Y."/>
            <person name="Hino Y."/>
            <person name="Horikawa H."/>
            <person name="Jin-no K."/>
            <person name="Takahashi M."/>
            <person name="Sekine M."/>
            <person name="Baba S."/>
            <person name="Ankai A."/>
            <person name="Kosugi H."/>
            <person name="Hosoyama A."/>
            <person name="Fukui S."/>
            <person name="Nagai Y."/>
            <person name="Nishijima K."/>
            <person name="Otsuka R."/>
            <person name="Nakazawa H."/>
            <person name="Takamiya M."/>
            <person name="Kato Y."/>
            <person name="Yoshizawa T."/>
            <person name="Tanaka T."/>
            <person name="Kudoh Y."/>
            <person name="Yamazaki J."/>
            <person name="Kushida N."/>
            <person name="Oguchi A."/>
            <person name="Aoki K."/>
            <person name="Masuda S."/>
            <person name="Yanagii M."/>
            <person name="Nishimura M."/>
            <person name="Yamagishi A."/>
            <person name="Oshima T."/>
            <person name="Kikuchi H."/>
        </authorList>
    </citation>
    <scope>NUCLEOTIDE SEQUENCE [LARGE SCALE GENOMIC DNA]</scope>
    <source>
        <strain>DSM 16993 / JCM 10545 / NBRC 100140 / 7</strain>
    </source>
</reference>
<organism>
    <name type="scientific">Sulfurisphaera tokodaii (strain DSM 16993 / JCM 10545 / NBRC 100140 / 7)</name>
    <name type="common">Sulfolobus tokodaii</name>
    <dbReference type="NCBI Taxonomy" id="273063"/>
    <lineage>
        <taxon>Archaea</taxon>
        <taxon>Thermoproteota</taxon>
        <taxon>Thermoprotei</taxon>
        <taxon>Sulfolobales</taxon>
        <taxon>Sulfolobaceae</taxon>
        <taxon>Sulfurisphaera</taxon>
    </lineage>
</organism>
<proteinExistence type="inferred from homology"/>
<gene>
    <name evidence="1" type="primary">metG</name>
    <name type="ordered locus">STK_14320</name>
</gene>